<organism>
    <name type="scientific">Vibrio parahaemolyticus serotype O3:K6 (strain RIMD 2210633)</name>
    <dbReference type="NCBI Taxonomy" id="223926"/>
    <lineage>
        <taxon>Bacteria</taxon>
        <taxon>Pseudomonadati</taxon>
        <taxon>Pseudomonadota</taxon>
        <taxon>Gammaproteobacteria</taxon>
        <taxon>Vibrionales</taxon>
        <taxon>Vibrionaceae</taxon>
        <taxon>Vibrio</taxon>
    </lineage>
</organism>
<comment type="catalytic activity">
    <reaction evidence="1">
        <text>(6R)-10-formyltetrahydrofolate + 5-amino-1-(5-phospho-beta-D-ribosyl)imidazole-4-carboxamide = 5-formamido-1-(5-phospho-D-ribosyl)imidazole-4-carboxamide + (6S)-5,6,7,8-tetrahydrofolate</text>
        <dbReference type="Rhea" id="RHEA:22192"/>
        <dbReference type="ChEBI" id="CHEBI:57453"/>
        <dbReference type="ChEBI" id="CHEBI:58467"/>
        <dbReference type="ChEBI" id="CHEBI:58475"/>
        <dbReference type="ChEBI" id="CHEBI:195366"/>
        <dbReference type="EC" id="2.1.2.3"/>
    </reaction>
</comment>
<comment type="catalytic activity">
    <reaction evidence="1">
        <text>IMP + H2O = 5-formamido-1-(5-phospho-D-ribosyl)imidazole-4-carboxamide</text>
        <dbReference type="Rhea" id="RHEA:18445"/>
        <dbReference type="ChEBI" id="CHEBI:15377"/>
        <dbReference type="ChEBI" id="CHEBI:58053"/>
        <dbReference type="ChEBI" id="CHEBI:58467"/>
        <dbReference type="EC" id="3.5.4.10"/>
    </reaction>
</comment>
<comment type="pathway">
    <text evidence="1">Purine metabolism; IMP biosynthesis via de novo pathway; 5-formamido-1-(5-phospho-D-ribosyl)imidazole-4-carboxamide from 5-amino-1-(5-phospho-D-ribosyl)imidazole-4-carboxamide (10-formyl THF route): step 1/1.</text>
</comment>
<comment type="pathway">
    <text evidence="1">Purine metabolism; IMP biosynthesis via de novo pathway; IMP from 5-formamido-1-(5-phospho-D-ribosyl)imidazole-4-carboxamide: step 1/1.</text>
</comment>
<comment type="domain">
    <text evidence="1">The IMP cyclohydrolase activity resides in the N-terminal region.</text>
</comment>
<comment type="similarity">
    <text evidence="1">Belongs to the PurH family.</text>
</comment>
<feature type="chain" id="PRO_0000192146" description="Bifunctional purine biosynthesis protein PurH">
    <location>
        <begin position="1"/>
        <end position="530"/>
    </location>
</feature>
<feature type="domain" description="MGS-like" evidence="2">
    <location>
        <begin position="1"/>
        <end position="148"/>
    </location>
</feature>
<protein>
    <recommendedName>
        <fullName evidence="1">Bifunctional purine biosynthesis protein PurH</fullName>
    </recommendedName>
    <domain>
        <recommendedName>
            <fullName evidence="1">Phosphoribosylaminoimidazolecarboxamide formyltransferase</fullName>
            <ecNumber evidence="1">2.1.2.3</ecNumber>
        </recommendedName>
        <alternativeName>
            <fullName evidence="1">AICAR transformylase</fullName>
        </alternativeName>
    </domain>
    <domain>
        <recommendedName>
            <fullName evidence="1">IMP cyclohydrolase</fullName>
            <ecNumber evidence="1">3.5.4.10</ecNumber>
        </recommendedName>
        <alternativeName>
            <fullName evidence="1">ATIC</fullName>
        </alternativeName>
        <alternativeName>
            <fullName evidence="1">IMP synthase</fullName>
        </alternativeName>
        <alternativeName>
            <fullName evidence="1">Inosinicase</fullName>
        </alternativeName>
    </domain>
</protein>
<dbReference type="EC" id="2.1.2.3" evidence="1"/>
<dbReference type="EC" id="3.5.4.10" evidence="1"/>
<dbReference type="EMBL" id="BA000031">
    <property type="protein sequence ID" value="BAC61159.1"/>
    <property type="molecule type" value="Genomic_DNA"/>
</dbReference>
<dbReference type="RefSeq" id="NP_799275.1">
    <property type="nucleotide sequence ID" value="NC_004603.1"/>
</dbReference>
<dbReference type="RefSeq" id="WP_005456445.1">
    <property type="nucleotide sequence ID" value="NC_004603.1"/>
</dbReference>
<dbReference type="SMR" id="Q87KT0"/>
<dbReference type="GeneID" id="1190471"/>
<dbReference type="KEGG" id="vpa:VP2896"/>
<dbReference type="PATRIC" id="fig|223926.6.peg.2787"/>
<dbReference type="eggNOG" id="COG0138">
    <property type="taxonomic scope" value="Bacteria"/>
</dbReference>
<dbReference type="HOGENOM" id="CLU_016316_5_2_6"/>
<dbReference type="UniPathway" id="UPA00074">
    <property type="reaction ID" value="UER00133"/>
</dbReference>
<dbReference type="UniPathway" id="UPA00074">
    <property type="reaction ID" value="UER00135"/>
</dbReference>
<dbReference type="Proteomes" id="UP000002493">
    <property type="component" value="Chromosome 1"/>
</dbReference>
<dbReference type="GO" id="GO:0005829">
    <property type="term" value="C:cytosol"/>
    <property type="evidence" value="ECO:0007669"/>
    <property type="project" value="TreeGrafter"/>
</dbReference>
<dbReference type="GO" id="GO:0003937">
    <property type="term" value="F:IMP cyclohydrolase activity"/>
    <property type="evidence" value="ECO:0007669"/>
    <property type="project" value="UniProtKB-UniRule"/>
</dbReference>
<dbReference type="GO" id="GO:0004643">
    <property type="term" value="F:phosphoribosylaminoimidazolecarboxamide formyltransferase activity"/>
    <property type="evidence" value="ECO:0007669"/>
    <property type="project" value="UniProtKB-UniRule"/>
</dbReference>
<dbReference type="GO" id="GO:0006189">
    <property type="term" value="P:'de novo' IMP biosynthetic process"/>
    <property type="evidence" value="ECO:0007669"/>
    <property type="project" value="UniProtKB-UniRule"/>
</dbReference>
<dbReference type="CDD" id="cd01421">
    <property type="entry name" value="IMPCH"/>
    <property type="match status" value="1"/>
</dbReference>
<dbReference type="FunFam" id="3.40.140.20:FF:000001">
    <property type="entry name" value="Bifunctional purine biosynthesis protein PurH"/>
    <property type="match status" value="1"/>
</dbReference>
<dbReference type="FunFam" id="3.40.140.20:FF:000002">
    <property type="entry name" value="Bifunctional purine biosynthesis protein PurH"/>
    <property type="match status" value="1"/>
</dbReference>
<dbReference type="FunFam" id="3.40.50.1380:FF:000001">
    <property type="entry name" value="Bifunctional purine biosynthesis protein PurH"/>
    <property type="match status" value="1"/>
</dbReference>
<dbReference type="Gene3D" id="3.40.140.20">
    <property type="match status" value="2"/>
</dbReference>
<dbReference type="Gene3D" id="3.40.50.1380">
    <property type="entry name" value="Methylglyoxal synthase-like domain"/>
    <property type="match status" value="1"/>
</dbReference>
<dbReference type="HAMAP" id="MF_00139">
    <property type="entry name" value="PurH"/>
    <property type="match status" value="1"/>
</dbReference>
<dbReference type="InterPro" id="IPR024051">
    <property type="entry name" value="AICAR_Tfase_dup_dom_sf"/>
</dbReference>
<dbReference type="InterPro" id="IPR016193">
    <property type="entry name" value="Cytidine_deaminase-like"/>
</dbReference>
<dbReference type="InterPro" id="IPR011607">
    <property type="entry name" value="MGS-like_dom"/>
</dbReference>
<dbReference type="InterPro" id="IPR036914">
    <property type="entry name" value="MGS-like_dom_sf"/>
</dbReference>
<dbReference type="InterPro" id="IPR002695">
    <property type="entry name" value="PurH-like"/>
</dbReference>
<dbReference type="NCBIfam" id="NF002049">
    <property type="entry name" value="PRK00881.1"/>
    <property type="match status" value="1"/>
</dbReference>
<dbReference type="NCBIfam" id="TIGR00355">
    <property type="entry name" value="purH"/>
    <property type="match status" value="1"/>
</dbReference>
<dbReference type="PANTHER" id="PTHR11692:SF0">
    <property type="entry name" value="BIFUNCTIONAL PURINE BIOSYNTHESIS PROTEIN ATIC"/>
    <property type="match status" value="1"/>
</dbReference>
<dbReference type="PANTHER" id="PTHR11692">
    <property type="entry name" value="BIFUNCTIONAL PURINE BIOSYNTHESIS PROTEIN PURH"/>
    <property type="match status" value="1"/>
</dbReference>
<dbReference type="Pfam" id="PF01808">
    <property type="entry name" value="AICARFT_IMPCHas"/>
    <property type="match status" value="1"/>
</dbReference>
<dbReference type="Pfam" id="PF02142">
    <property type="entry name" value="MGS"/>
    <property type="match status" value="1"/>
</dbReference>
<dbReference type="PIRSF" id="PIRSF000414">
    <property type="entry name" value="AICARFT_IMPCHas"/>
    <property type="match status" value="1"/>
</dbReference>
<dbReference type="SMART" id="SM00798">
    <property type="entry name" value="AICARFT_IMPCHas"/>
    <property type="match status" value="1"/>
</dbReference>
<dbReference type="SMART" id="SM00851">
    <property type="entry name" value="MGS"/>
    <property type="match status" value="1"/>
</dbReference>
<dbReference type="SUPFAM" id="SSF53927">
    <property type="entry name" value="Cytidine deaminase-like"/>
    <property type="match status" value="1"/>
</dbReference>
<dbReference type="SUPFAM" id="SSF52335">
    <property type="entry name" value="Methylglyoxal synthase-like"/>
    <property type="match status" value="1"/>
</dbReference>
<dbReference type="PROSITE" id="PS51855">
    <property type="entry name" value="MGS"/>
    <property type="match status" value="1"/>
</dbReference>
<evidence type="ECO:0000255" key="1">
    <source>
        <dbReference type="HAMAP-Rule" id="MF_00139"/>
    </source>
</evidence>
<evidence type="ECO:0000255" key="2">
    <source>
        <dbReference type="PROSITE-ProRule" id="PRU01202"/>
    </source>
</evidence>
<gene>
    <name evidence="1" type="primary">purH</name>
    <name type="ordered locus">VP2896</name>
</gene>
<keyword id="KW-0378">Hydrolase</keyword>
<keyword id="KW-0511">Multifunctional enzyme</keyword>
<keyword id="KW-0658">Purine biosynthesis</keyword>
<keyword id="KW-0808">Transferase</keyword>
<accession>Q87KT0</accession>
<reference key="1">
    <citation type="journal article" date="2003" name="Lancet">
        <title>Genome sequence of Vibrio parahaemolyticus: a pathogenic mechanism distinct from that of V. cholerae.</title>
        <authorList>
            <person name="Makino K."/>
            <person name="Oshima K."/>
            <person name="Kurokawa K."/>
            <person name="Yokoyama K."/>
            <person name="Uda T."/>
            <person name="Tagomori K."/>
            <person name="Iijima Y."/>
            <person name="Najima M."/>
            <person name="Nakano M."/>
            <person name="Yamashita A."/>
            <person name="Kubota Y."/>
            <person name="Kimura S."/>
            <person name="Yasunaga T."/>
            <person name="Honda T."/>
            <person name="Shinagawa H."/>
            <person name="Hattori M."/>
            <person name="Iida T."/>
        </authorList>
    </citation>
    <scope>NUCLEOTIDE SEQUENCE [LARGE SCALE GENOMIC DNA]</scope>
    <source>
        <strain>RIMD 2210633</strain>
    </source>
</reference>
<name>PUR9_VIBPA</name>
<proteinExistence type="inferred from homology"/>
<sequence length="530" mass="57322">MNNARPIRRALISVSDKTGIVEFAQALAERGVDILSTGGTARLLAEQGIAVTEVSDYTGFPEMMDGRVKTLHPKVHGGVLGRRGQDDDVMAKHGINPIDMVVVNLYPFAETVAKDGCTLADAVENIDIGGPTMVRSAAKNHKDVTIVVNASDYDRVIAEMDANDKSLTLETRFDLAIAAFEHTAAYDGMIANYFGTMVPSYGENKEGDEESKFPRTFNQQFEKKQDMRYGENSHQAAAFYVEANPQEASVSTARQIQGKALSYNNIADTDAALECVKEFNEPACVIVKHANPCGVALGKDILEAYNRAYQTDPTSAFGGIIAFNQELDAETASAIVERQFVEVIIAPSVSAEAIEVVAAKKNVRLLECGEWTTKTTGFDVKRVNGGLLVQDRDQGMVSLDDLKVVSKRQPTEEELKDALFCWKVAKYVKSNAIVYAKGDMTIGVGAGQMSRVYSAKIAGIKAADEGLEVAGSVMASDAFFPFRDGIDAAAEAGIKCVIQPGGSMRDDEVIAAADEHGMAMIFTGMRHFRH</sequence>